<protein>
    <recommendedName>
        <fullName>Cycloartenol synthase</fullName>
        <ecNumber>5.4.99.8</ecNumber>
    </recommendedName>
</protein>
<sequence>MWRLRVAEGGGDPWLRTKNGHVGRQVWEFDPAAGDPDELAAVEAARRGFAARRHELKHSSDLLMRMQFAKANPLKLDIPAIKLEEHEAVTGEAVLSSLKRAIARYSTFQAHDGHWPGDYGGPMFLMPGLIITLYVSGALNTALSSEHQKEIRRYLYNHQNEDGGWGLHIEGHSTMFGSALTYVSLRLLGEGPDSGDGAMEKGRKWILDHGGATYITSWGKFWLSVLGVFDWSGNNPVPPEIWLLPYFLPIHPGRMWCHCRMVYLPMCYIYGKRFVGPVTPIILELRKELYEVPYNEVDWDKARNLCAKEDLYYPHPFVQDVLWATLHKFVEPAMLRWPGNKLREKALDTVMQHIHYEDENTRYICIGPVNKVLNMLACWIEDPNSEAFKLHIPRVHDYLWIAEDGMKMQGYNGSQLWDTAFTVQAIVATGLIEEFGPTLKLAHGYIKKTQVIDDCPGDLSQWYRHISKGAWPFSTADHGWPISDCTAEGLKAALLLSKISPDIVGEAVEVNRLYDSVNCLMSYMNDNGGFATYELTRSYAWLELINPAETFGDIVIDYPYVECTSAAIQALTAFKKLYPGHRKSEIDNCISKAASFIEGIQKSDGSWYGSWAVCFTYGTWFGVKGLVAAGRTFKNSPAIRKACDFLLSKELPSGGWGESYLSSQDQVYTNLEGKRPHAVNTGWAMLALIDAGQAERDPIPLHRAAKVLINLQSEDGEFPQQEIIGVFNKNCMISYSEYRNIFPIWALGEYRRRVLAADK</sequence>
<accession>Q6Z2X6</accession>
<accession>A0A0P0VEQ1</accession>
<accession>Q9SPJ0</accession>
<proteinExistence type="evidence at protein level"/>
<dbReference type="EC" id="5.4.99.8"/>
<dbReference type="EMBL" id="AP005294">
    <property type="protein sequence ID" value="BAD10254.1"/>
    <property type="molecule type" value="Genomic_DNA"/>
</dbReference>
<dbReference type="EMBL" id="AP008208">
    <property type="protein sequence ID" value="BAF07762.1"/>
    <property type="molecule type" value="Genomic_DNA"/>
</dbReference>
<dbReference type="EMBL" id="AP014958">
    <property type="protein sequence ID" value="BAS76910.1"/>
    <property type="molecule type" value="Genomic_DNA"/>
</dbReference>
<dbReference type="EMBL" id="AK121211">
    <property type="protein sequence ID" value="BAH00370.1"/>
    <property type="molecule type" value="mRNA"/>
</dbReference>
<dbReference type="EMBL" id="AF169966">
    <property type="protein sequence ID" value="AAF03375.1"/>
    <property type="molecule type" value="mRNA"/>
</dbReference>
<dbReference type="RefSeq" id="XP_015625472.1">
    <property type="nucleotide sequence ID" value="XM_015769986.1"/>
</dbReference>
<dbReference type="SMR" id="Q6Z2X6"/>
<dbReference type="FunCoup" id="Q6Z2X6">
    <property type="interactions" value="1595"/>
</dbReference>
<dbReference type="STRING" id="39947.Q6Z2X6"/>
<dbReference type="PaxDb" id="39947-Q6Z2X6"/>
<dbReference type="EnsemblPlants" id="Os02t0139700-01">
    <property type="protein sequence ID" value="Os02t0139700-01"/>
    <property type="gene ID" value="Os02g0139700"/>
</dbReference>
<dbReference type="Gramene" id="Os02t0139700-01">
    <property type="protein sequence ID" value="Os02t0139700-01"/>
    <property type="gene ID" value="Os02g0139700"/>
</dbReference>
<dbReference type="KEGG" id="dosa:Os02g0139700"/>
<dbReference type="eggNOG" id="KOG0497">
    <property type="taxonomic scope" value="Eukaryota"/>
</dbReference>
<dbReference type="HOGENOM" id="CLU_009074_2_0_1"/>
<dbReference type="InParanoid" id="Q6Z2X6"/>
<dbReference type="OMA" id="CWARQTI"/>
<dbReference type="OrthoDB" id="602388at2759"/>
<dbReference type="BioCyc" id="MetaCyc:MONOMER-17968"/>
<dbReference type="BRENDA" id="5.4.99.8">
    <property type="organism ID" value="4460"/>
</dbReference>
<dbReference type="Proteomes" id="UP000000763">
    <property type="component" value="Chromosome 2"/>
</dbReference>
<dbReference type="Proteomes" id="UP000059680">
    <property type="component" value="Chromosome 2"/>
</dbReference>
<dbReference type="GO" id="GO:0005811">
    <property type="term" value="C:lipid droplet"/>
    <property type="evidence" value="ECO:0007669"/>
    <property type="project" value="InterPro"/>
</dbReference>
<dbReference type="GO" id="GO:0016871">
    <property type="term" value="F:cycloartenol synthase activity"/>
    <property type="evidence" value="ECO:0007669"/>
    <property type="project" value="UniProtKB-EC"/>
</dbReference>
<dbReference type="GO" id="GO:0016104">
    <property type="term" value="P:triterpenoid biosynthetic process"/>
    <property type="evidence" value="ECO:0007669"/>
    <property type="project" value="InterPro"/>
</dbReference>
<dbReference type="CDD" id="cd02892">
    <property type="entry name" value="SQCY_1"/>
    <property type="match status" value="1"/>
</dbReference>
<dbReference type="FunFam" id="1.50.10.20:FF:000002">
    <property type="entry name" value="Terpene cyclase/mutase family member"/>
    <property type="match status" value="1"/>
</dbReference>
<dbReference type="FunFam" id="1.50.10.20:FF:000022">
    <property type="entry name" value="Terpene cyclase/mutase family member"/>
    <property type="match status" value="1"/>
</dbReference>
<dbReference type="Gene3D" id="1.50.10.20">
    <property type="match status" value="2"/>
</dbReference>
<dbReference type="InterPro" id="IPR032696">
    <property type="entry name" value="SQ_cyclase_C"/>
</dbReference>
<dbReference type="InterPro" id="IPR032697">
    <property type="entry name" value="SQ_cyclase_N"/>
</dbReference>
<dbReference type="InterPro" id="IPR018333">
    <property type="entry name" value="Squalene_cyclase"/>
</dbReference>
<dbReference type="InterPro" id="IPR002365">
    <property type="entry name" value="Terpene_synthase_CS"/>
</dbReference>
<dbReference type="InterPro" id="IPR008930">
    <property type="entry name" value="Terpenoid_cyclase/PrenylTrfase"/>
</dbReference>
<dbReference type="NCBIfam" id="TIGR01787">
    <property type="entry name" value="squalene_cyclas"/>
    <property type="match status" value="1"/>
</dbReference>
<dbReference type="PANTHER" id="PTHR11764:SF20">
    <property type="entry name" value="LANOSTEROL SYNTHASE"/>
    <property type="match status" value="1"/>
</dbReference>
<dbReference type="PANTHER" id="PTHR11764">
    <property type="entry name" value="TERPENE CYCLASE/MUTASE FAMILY MEMBER"/>
    <property type="match status" value="1"/>
</dbReference>
<dbReference type="Pfam" id="PF13243">
    <property type="entry name" value="SQHop_cyclase_C"/>
    <property type="match status" value="1"/>
</dbReference>
<dbReference type="Pfam" id="PF13249">
    <property type="entry name" value="SQHop_cyclase_N"/>
    <property type="match status" value="1"/>
</dbReference>
<dbReference type="SFLD" id="SFLDG01016">
    <property type="entry name" value="Prenyltransferase_Like_2"/>
    <property type="match status" value="1"/>
</dbReference>
<dbReference type="SUPFAM" id="SSF48239">
    <property type="entry name" value="Terpenoid cyclases/Protein prenyltransferases"/>
    <property type="match status" value="2"/>
</dbReference>
<dbReference type="PROSITE" id="PS01074">
    <property type="entry name" value="TERPENE_SYNTHASES"/>
    <property type="match status" value="1"/>
</dbReference>
<gene>
    <name type="ordered locus">Os02g0139700</name>
    <name type="ordered locus">LOC_Os02g04710</name>
    <name type="ORF">OJ1679_B08.9</name>
</gene>
<evidence type="ECO:0000250" key="1">
    <source>
        <dbReference type="UniProtKB" id="P48449"/>
    </source>
</evidence>
<evidence type="ECO:0000269" key="2">
    <source>
    </source>
</evidence>
<evidence type="ECO:0000305" key="3"/>
<reference key="1">
    <citation type="journal article" date="2005" name="Nature">
        <title>The map-based sequence of the rice genome.</title>
        <authorList>
            <consortium name="International rice genome sequencing project (IRGSP)"/>
        </authorList>
    </citation>
    <scope>NUCLEOTIDE SEQUENCE [LARGE SCALE GENOMIC DNA]</scope>
    <source>
        <strain>cv. Nipponbare</strain>
    </source>
</reference>
<reference key="2">
    <citation type="journal article" date="2008" name="Nucleic Acids Res.">
        <title>The rice annotation project database (RAP-DB): 2008 update.</title>
        <authorList>
            <consortium name="The rice annotation project (RAP)"/>
        </authorList>
    </citation>
    <scope>GENOME REANNOTATION</scope>
    <source>
        <strain>cv. Nipponbare</strain>
    </source>
</reference>
<reference key="3">
    <citation type="journal article" date="2013" name="Rice">
        <title>Improvement of the Oryza sativa Nipponbare reference genome using next generation sequence and optical map data.</title>
        <authorList>
            <person name="Kawahara Y."/>
            <person name="de la Bastide M."/>
            <person name="Hamilton J.P."/>
            <person name="Kanamori H."/>
            <person name="McCombie W.R."/>
            <person name="Ouyang S."/>
            <person name="Schwartz D.C."/>
            <person name="Tanaka T."/>
            <person name="Wu J."/>
            <person name="Zhou S."/>
            <person name="Childs K.L."/>
            <person name="Davidson R.M."/>
            <person name="Lin H."/>
            <person name="Quesada-Ocampo L."/>
            <person name="Vaillancourt B."/>
            <person name="Sakai H."/>
            <person name="Lee S.S."/>
            <person name="Kim J."/>
            <person name="Numa H."/>
            <person name="Itoh T."/>
            <person name="Buell C.R."/>
            <person name="Matsumoto T."/>
        </authorList>
    </citation>
    <scope>GENOME REANNOTATION</scope>
    <source>
        <strain>cv. Nipponbare</strain>
    </source>
</reference>
<reference key="4">
    <citation type="journal article" date="2003" name="Science">
        <title>Collection, mapping, and annotation of over 28,000 cDNA clones from japonica rice.</title>
        <authorList>
            <consortium name="The rice full-length cDNA consortium"/>
        </authorList>
    </citation>
    <scope>NUCLEOTIDE SEQUENCE [LARGE SCALE MRNA]</scope>
    <source>
        <strain>cv. Nipponbare</strain>
    </source>
</reference>
<reference key="5">
    <citation type="online journal article" date="1999" name="Plant Gene Register">
        <title>A rice cDNA similar to cycloartenol synthase.</title>
        <authorList>
            <person name="Darr L.B."/>
            <person name="Godzina S.M."/>
            <person name="Matsuda S.P.T."/>
        </authorList>
        <locator>PGR99-155</locator>
    </citation>
    <scope>NUCLEOTIDE SEQUENCE [MRNA] OF 3-759</scope>
</reference>
<reference key="6">
    <citation type="journal article" date="2011" name="Org. Lett.">
        <title>Triterpene cyclases from Oryza sativa L.: cycloartenol, parkeol and achilleol B synthases.</title>
        <authorList>
            <person name="Ito R."/>
            <person name="Mori K."/>
            <person name="Hashimoto I."/>
            <person name="Nakano C."/>
            <person name="Sato T."/>
            <person name="Hoshino T."/>
        </authorList>
    </citation>
    <scope>FUNCTION</scope>
    <scope>CATALYTIC ACTIVITY</scope>
</reference>
<organism>
    <name type="scientific">Oryza sativa subsp. japonica</name>
    <name type="common">Rice</name>
    <dbReference type="NCBI Taxonomy" id="39947"/>
    <lineage>
        <taxon>Eukaryota</taxon>
        <taxon>Viridiplantae</taxon>
        <taxon>Streptophyta</taxon>
        <taxon>Embryophyta</taxon>
        <taxon>Tracheophyta</taxon>
        <taxon>Spermatophyta</taxon>
        <taxon>Magnoliopsida</taxon>
        <taxon>Liliopsida</taxon>
        <taxon>Poales</taxon>
        <taxon>Poaceae</taxon>
        <taxon>BOP clade</taxon>
        <taxon>Oryzoideae</taxon>
        <taxon>Oryzeae</taxon>
        <taxon>Oryzinae</taxon>
        <taxon>Oryza</taxon>
        <taxon>Oryza sativa</taxon>
    </lineage>
</organism>
<feature type="chain" id="PRO_0000418964" description="Cycloartenol synthase">
    <location>
        <begin position="1"/>
        <end position="759"/>
    </location>
</feature>
<feature type="repeat" description="PFTB 1">
    <location>
        <begin position="148"/>
        <end position="189"/>
    </location>
</feature>
<feature type="repeat" description="PFTB 2">
    <location>
        <begin position="513"/>
        <end position="558"/>
    </location>
</feature>
<feature type="repeat" description="PFTB 3">
    <location>
        <begin position="590"/>
        <end position="630"/>
    </location>
</feature>
<feature type="repeat" description="PFTB 4">
    <location>
        <begin position="639"/>
        <end position="680"/>
    </location>
</feature>
<feature type="active site" description="Proton donor" evidence="1">
    <location>
        <position position="484"/>
    </location>
</feature>
<keyword id="KW-0413">Isomerase</keyword>
<keyword id="KW-1185">Reference proteome</keyword>
<keyword id="KW-0677">Repeat</keyword>
<comment type="function">
    <text evidence="2">Converts oxidosqualene ((3S)-2,3-epoxy-2,3-dihydrosqualene) to cycloartenol.</text>
</comment>
<comment type="catalytic activity">
    <reaction evidence="2">
        <text>(S)-2,3-epoxysqualene = cycloartenol</text>
        <dbReference type="Rhea" id="RHEA:21308"/>
        <dbReference type="ChEBI" id="CHEBI:15441"/>
        <dbReference type="ChEBI" id="CHEBI:17030"/>
        <dbReference type="EC" id="5.4.99.8"/>
    </reaction>
</comment>
<comment type="similarity">
    <text evidence="3">Belongs to the terpene cyclase/mutase family.</text>
</comment>
<name>CAS_ORYSJ</name>